<evidence type="ECO:0000255" key="1">
    <source>
        <dbReference type="HAMAP-Rule" id="MF_00197"/>
    </source>
</evidence>
<gene>
    <name evidence="1" type="primary">dapF</name>
    <name type="ordered locus">ELI_03915</name>
</gene>
<feature type="chain" id="PRO_1000011879" description="Diaminopimelate epimerase">
    <location>
        <begin position="1"/>
        <end position="269"/>
    </location>
</feature>
<feature type="active site" description="Proton donor" evidence="1">
    <location>
        <position position="74"/>
    </location>
</feature>
<feature type="active site" description="Proton acceptor" evidence="1">
    <location>
        <position position="209"/>
    </location>
</feature>
<feature type="binding site" evidence="1">
    <location>
        <position position="13"/>
    </location>
    <ligand>
        <name>substrate</name>
    </ligand>
</feature>
<feature type="binding site" evidence="1">
    <location>
        <position position="47"/>
    </location>
    <ligand>
        <name>substrate</name>
    </ligand>
</feature>
<feature type="binding site" evidence="1">
    <location>
        <position position="65"/>
    </location>
    <ligand>
        <name>substrate</name>
    </ligand>
</feature>
<feature type="binding site" evidence="1">
    <location>
        <begin position="75"/>
        <end position="76"/>
    </location>
    <ligand>
        <name>substrate</name>
    </ligand>
</feature>
<feature type="binding site" evidence="1">
    <location>
        <position position="149"/>
    </location>
    <ligand>
        <name>substrate</name>
    </ligand>
</feature>
<feature type="binding site" evidence="1">
    <location>
        <position position="182"/>
    </location>
    <ligand>
        <name>substrate</name>
    </ligand>
</feature>
<feature type="binding site" evidence="1">
    <location>
        <begin position="200"/>
        <end position="201"/>
    </location>
    <ligand>
        <name>substrate</name>
    </ligand>
</feature>
<feature type="binding site" evidence="1">
    <location>
        <begin position="210"/>
        <end position="211"/>
    </location>
    <ligand>
        <name>substrate</name>
    </ligand>
</feature>
<feature type="site" description="Could be important to modulate the pK values of the two catalytic cysteine residues" evidence="1">
    <location>
        <position position="151"/>
    </location>
</feature>
<feature type="site" description="Could be important to modulate the pK values of the two catalytic cysteine residues" evidence="1">
    <location>
        <position position="200"/>
    </location>
</feature>
<comment type="function">
    <text evidence="1">Catalyzes the stereoinversion of LL-2,6-diaminopimelate (L,L-DAP) to meso-diaminopimelate (meso-DAP), a precursor of L-lysine and an essential component of the bacterial peptidoglycan.</text>
</comment>
<comment type="catalytic activity">
    <reaction evidence="1">
        <text>(2S,6S)-2,6-diaminopimelate = meso-2,6-diaminopimelate</text>
        <dbReference type="Rhea" id="RHEA:15393"/>
        <dbReference type="ChEBI" id="CHEBI:57609"/>
        <dbReference type="ChEBI" id="CHEBI:57791"/>
        <dbReference type="EC" id="5.1.1.7"/>
    </reaction>
</comment>
<comment type="pathway">
    <text evidence="1">Amino-acid biosynthesis; L-lysine biosynthesis via DAP pathway; DL-2,6-diaminopimelate from LL-2,6-diaminopimelate: step 1/1.</text>
</comment>
<comment type="subunit">
    <text evidence="1">Homodimer.</text>
</comment>
<comment type="subcellular location">
    <subcellularLocation>
        <location evidence="1">Cytoplasm</location>
    </subcellularLocation>
</comment>
<comment type="similarity">
    <text evidence="1">Belongs to the diaminopimelate epimerase family.</text>
</comment>
<organism>
    <name type="scientific">Erythrobacter litoralis (strain HTCC2594)</name>
    <dbReference type="NCBI Taxonomy" id="314225"/>
    <lineage>
        <taxon>Bacteria</taxon>
        <taxon>Pseudomonadati</taxon>
        <taxon>Pseudomonadota</taxon>
        <taxon>Alphaproteobacteria</taxon>
        <taxon>Sphingomonadales</taxon>
        <taxon>Erythrobacteraceae</taxon>
        <taxon>Erythrobacter/Porphyrobacter group</taxon>
        <taxon>Erythrobacter</taxon>
    </lineage>
</organism>
<accession>Q2NBR6</accession>
<name>DAPF_ERYLH</name>
<dbReference type="EC" id="5.1.1.7" evidence="1"/>
<dbReference type="EMBL" id="CP000157">
    <property type="protein sequence ID" value="ABC62875.1"/>
    <property type="molecule type" value="Genomic_DNA"/>
</dbReference>
<dbReference type="RefSeq" id="WP_011413751.1">
    <property type="nucleotide sequence ID" value="NC_007722.1"/>
</dbReference>
<dbReference type="SMR" id="Q2NBR6"/>
<dbReference type="STRING" id="314225.ELI_03915"/>
<dbReference type="KEGG" id="eli:ELI_03915"/>
<dbReference type="eggNOG" id="COG0253">
    <property type="taxonomic scope" value="Bacteria"/>
</dbReference>
<dbReference type="HOGENOM" id="CLU_053306_1_0_5"/>
<dbReference type="OrthoDB" id="9805408at2"/>
<dbReference type="UniPathway" id="UPA00034">
    <property type="reaction ID" value="UER00025"/>
</dbReference>
<dbReference type="Proteomes" id="UP000008808">
    <property type="component" value="Chromosome"/>
</dbReference>
<dbReference type="GO" id="GO:0005829">
    <property type="term" value="C:cytosol"/>
    <property type="evidence" value="ECO:0007669"/>
    <property type="project" value="TreeGrafter"/>
</dbReference>
<dbReference type="GO" id="GO:0008837">
    <property type="term" value="F:diaminopimelate epimerase activity"/>
    <property type="evidence" value="ECO:0007669"/>
    <property type="project" value="UniProtKB-UniRule"/>
</dbReference>
<dbReference type="GO" id="GO:0009089">
    <property type="term" value="P:lysine biosynthetic process via diaminopimelate"/>
    <property type="evidence" value="ECO:0007669"/>
    <property type="project" value="UniProtKB-UniRule"/>
</dbReference>
<dbReference type="Gene3D" id="3.10.310.10">
    <property type="entry name" value="Diaminopimelate Epimerase, Chain A, domain 1"/>
    <property type="match status" value="2"/>
</dbReference>
<dbReference type="HAMAP" id="MF_00197">
    <property type="entry name" value="DAP_epimerase"/>
    <property type="match status" value="1"/>
</dbReference>
<dbReference type="InterPro" id="IPR018510">
    <property type="entry name" value="DAP_epimerase_AS"/>
</dbReference>
<dbReference type="InterPro" id="IPR001653">
    <property type="entry name" value="DAP_epimerase_DapF"/>
</dbReference>
<dbReference type="NCBIfam" id="TIGR00652">
    <property type="entry name" value="DapF"/>
    <property type="match status" value="1"/>
</dbReference>
<dbReference type="PANTHER" id="PTHR31689:SF0">
    <property type="entry name" value="DIAMINOPIMELATE EPIMERASE"/>
    <property type="match status" value="1"/>
</dbReference>
<dbReference type="PANTHER" id="PTHR31689">
    <property type="entry name" value="DIAMINOPIMELATE EPIMERASE, CHLOROPLASTIC"/>
    <property type="match status" value="1"/>
</dbReference>
<dbReference type="Pfam" id="PF01678">
    <property type="entry name" value="DAP_epimerase"/>
    <property type="match status" value="2"/>
</dbReference>
<dbReference type="SUPFAM" id="SSF54506">
    <property type="entry name" value="Diaminopimelate epimerase-like"/>
    <property type="match status" value="2"/>
</dbReference>
<dbReference type="PROSITE" id="PS01326">
    <property type="entry name" value="DAP_EPIMERASE"/>
    <property type="match status" value="1"/>
</dbReference>
<sequence length="269" mass="28238">MRVSFTKMHGLGNDFIMLDARAESLPPMTAATARALADRKTGIGCDQVILLEPSDSADFRMRIFNADGGEVEACGNASRAVALLHGEAANVETSGGVIAIAPASGGARVDMGVPRFDWEAIPLAYAMDTLSLPVGWGELEAPAAVNVGNPHVVFFVDDADAVPLDTMGPGIETDPLFPERINVNIASLTGDDALKLHVWERGVGLTRACGTGACATAIAAMRRGLTGRKVAVTLPGGTLQIEWDADDHIIMTGPAAESFRGTFDWGDYS</sequence>
<protein>
    <recommendedName>
        <fullName evidence="1">Diaminopimelate epimerase</fullName>
        <shortName evidence="1">DAP epimerase</shortName>
        <ecNumber evidence="1">5.1.1.7</ecNumber>
    </recommendedName>
    <alternativeName>
        <fullName evidence="1">PLP-independent amino acid racemase</fullName>
    </alternativeName>
</protein>
<proteinExistence type="inferred from homology"/>
<keyword id="KW-0028">Amino-acid biosynthesis</keyword>
<keyword id="KW-0963">Cytoplasm</keyword>
<keyword id="KW-0413">Isomerase</keyword>
<keyword id="KW-0457">Lysine biosynthesis</keyword>
<keyword id="KW-1185">Reference proteome</keyword>
<reference key="1">
    <citation type="journal article" date="2009" name="J. Bacteriol.">
        <title>Complete genome sequence of Erythrobacter litoralis HTCC2594.</title>
        <authorList>
            <person name="Oh H.M."/>
            <person name="Giovannoni S.J."/>
            <person name="Ferriera S."/>
            <person name="Johnson J."/>
            <person name="Cho J.C."/>
        </authorList>
    </citation>
    <scope>NUCLEOTIDE SEQUENCE [LARGE SCALE GENOMIC DNA]</scope>
    <source>
        <strain>HTCC2594</strain>
    </source>
</reference>